<protein>
    <recommendedName>
        <fullName>Uncharacterized protein MT0836</fullName>
    </recommendedName>
</protein>
<feature type="chain" id="PRO_0000396093" description="Uncharacterized protein MT0836">
    <location>
        <begin position="1"/>
        <end position="100"/>
    </location>
</feature>
<feature type="cross-link" description="Isoglutamyl lysine isopeptide (Lys-Gln) (interchain with Q-Cter in protein Pup)" evidence="1">
    <location>
        <position position="98"/>
    </location>
</feature>
<name>Y836_MYCTO</name>
<evidence type="ECO:0000250" key="1"/>
<sequence>MCSGPKQGLTLPASVDLEKETVITGRVVDGDGQAVGGAFVRLLDSSDEFTAEVVASATGDFRFFAAPGSWTLRALSAAGNGDAVVQPSGAGIHEVDVKIT</sequence>
<proteinExistence type="inferred from homology"/>
<gene>
    <name type="ordered locus">MT0836</name>
</gene>
<accession>P0CG97</accession>
<accession>Q6MX10</accession>
<accession>Q7ARR3</accession>
<accession>Q7D986</accession>
<dbReference type="EMBL" id="AE000516">
    <property type="protein sequence ID" value="AAK45078.1"/>
    <property type="molecule type" value="Genomic_DNA"/>
</dbReference>
<dbReference type="RefSeq" id="WP_003404278.1">
    <property type="nucleotide sequence ID" value="NZ_KK341227.1"/>
</dbReference>
<dbReference type="SMR" id="P0CG97"/>
<dbReference type="KEGG" id="mtc:MT0836"/>
<dbReference type="HOGENOM" id="CLU_154652_1_0_11"/>
<dbReference type="Proteomes" id="UP000001020">
    <property type="component" value="Chromosome"/>
</dbReference>
<dbReference type="FunFam" id="2.60.40.1120:FF:000013">
    <property type="entry name" value="DUF1416 domain-containing protein"/>
    <property type="match status" value="1"/>
</dbReference>
<dbReference type="Gene3D" id="2.60.40.1120">
    <property type="entry name" value="Carboxypeptidase-like, regulatory domain"/>
    <property type="match status" value="1"/>
</dbReference>
<dbReference type="InterPro" id="IPR008969">
    <property type="entry name" value="CarboxyPept-like_regulatory"/>
</dbReference>
<dbReference type="InterPro" id="IPR010814">
    <property type="entry name" value="DUF1416"/>
</dbReference>
<dbReference type="Pfam" id="PF07210">
    <property type="entry name" value="DUF1416"/>
    <property type="match status" value="1"/>
</dbReference>
<dbReference type="SUPFAM" id="SSF49464">
    <property type="entry name" value="Carboxypeptidase regulatory domain-like"/>
    <property type="match status" value="1"/>
</dbReference>
<keyword id="KW-1017">Isopeptide bond</keyword>
<keyword id="KW-1185">Reference proteome</keyword>
<keyword id="KW-0832">Ubl conjugation</keyword>
<reference key="1">
    <citation type="journal article" date="2002" name="J. Bacteriol.">
        <title>Whole-genome comparison of Mycobacterium tuberculosis clinical and laboratory strains.</title>
        <authorList>
            <person name="Fleischmann R.D."/>
            <person name="Alland D."/>
            <person name="Eisen J.A."/>
            <person name="Carpenter L."/>
            <person name="White O."/>
            <person name="Peterson J.D."/>
            <person name="DeBoy R.T."/>
            <person name="Dodson R.J."/>
            <person name="Gwinn M.L."/>
            <person name="Haft D.H."/>
            <person name="Hickey E.K."/>
            <person name="Kolonay J.F."/>
            <person name="Nelson W.C."/>
            <person name="Umayam L.A."/>
            <person name="Ermolaeva M.D."/>
            <person name="Salzberg S.L."/>
            <person name="Delcher A."/>
            <person name="Utterback T.R."/>
            <person name="Weidman J.F."/>
            <person name="Khouri H.M."/>
            <person name="Gill J."/>
            <person name="Mikula A."/>
            <person name="Bishai W."/>
            <person name="Jacobs W.R. Jr."/>
            <person name="Venter J.C."/>
            <person name="Fraser C.M."/>
        </authorList>
    </citation>
    <scope>NUCLEOTIDE SEQUENCE [LARGE SCALE GENOMIC DNA]</scope>
    <source>
        <strain>CDC 1551 / Oshkosh</strain>
    </source>
</reference>
<organism>
    <name type="scientific">Mycobacterium tuberculosis (strain CDC 1551 / Oshkosh)</name>
    <dbReference type="NCBI Taxonomy" id="83331"/>
    <lineage>
        <taxon>Bacteria</taxon>
        <taxon>Bacillati</taxon>
        <taxon>Actinomycetota</taxon>
        <taxon>Actinomycetes</taxon>
        <taxon>Mycobacteriales</taxon>
        <taxon>Mycobacteriaceae</taxon>
        <taxon>Mycobacterium</taxon>
        <taxon>Mycobacterium tuberculosis complex</taxon>
    </lineage>
</organism>